<protein>
    <recommendedName>
        <fullName evidence="1">Elongation factor 4</fullName>
        <shortName evidence="1">EF-4</shortName>
        <ecNumber evidence="1">3.6.5.n1</ecNumber>
    </recommendedName>
    <alternativeName>
        <fullName evidence="1">Ribosomal back-translocase LepA</fullName>
    </alternativeName>
</protein>
<name>LEPA_PSEP7</name>
<sequence length="599" mass="66309">MSDLSHIRNFSIIAHIDHGKSTLADRFIQMCGGLSDREMEAQVLDSMDLERERGITIKAHSVTLHYKAQDGKTYQLNFIDTPGHVDFTYEVSRSLAACEGALLVVDAGQGVEAQSVANCYTAIEQGLEVMPVLNKMDLPQAEPERVKEEIESIIGIDATDAVACSAKSGMGVLEVLERLVTVIPAPEGEIEAPLQALIIDSWFDNYLGVVSLVRVKNGRVKKGDKILVKSTGKVHQVDSVGVFTPKHTETADLKAGEVGFIIAGIKDIHGAPVGDTLTLNNTPDVEVLPGFKRVKPQVYAGLFPVSSDDFEDFRDALQKLTLNDSSLQYEPESSEALGFGFRCGFLGMLHMEIIQERLEREYDLDLITTAPTVVFEIVQKNGEIIYVDNPSKLPDLASIQEMREPICRATILVPKDHLGNVITLCIEKRGVQRDMHFLSGQVQVIYDLPMNEVVLDFFDRLKSTSRGYASLDYSFDRFEPSNLVRLDVLINGEKVDALALIVHRDNAPYKGRQLVEKMKELIPRQMFDVAIQAAIGGQIIARSTVKALRKNVLAKCYGGDVSRKRKLLEKQKAGKKRMKQVGSVEIPQEAFLAVLKVDS</sequence>
<gene>
    <name evidence="1" type="primary">lepA</name>
    <name type="ordered locus">PSPA7_4752</name>
</gene>
<keyword id="KW-0997">Cell inner membrane</keyword>
<keyword id="KW-1003">Cell membrane</keyword>
<keyword id="KW-0342">GTP-binding</keyword>
<keyword id="KW-0378">Hydrolase</keyword>
<keyword id="KW-0472">Membrane</keyword>
<keyword id="KW-0547">Nucleotide-binding</keyword>
<keyword id="KW-0648">Protein biosynthesis</keyword>
<feature type="chain" id="PRO_1000032037" description="Elongation factor 4">
    <location>
        <begin position="1"/>
        <end position="599"/>
    </location>
</feature>
<feature type="domain" description="tr-type G">
    <location>
        <begin position="5"/>
        <end position="187"/>
    </location>
</feature>
<feature type="binding site" evidence="1">
    <location>
        <begin position="17"/>
        <end position="22"/>
    </location>
    <ligand>
        <name>GTP</name>
        <dbReference type="ChEBI" id="CHEBI:37565"/>
    </ligand>
</feature>
<feature type="binding site" evidence="1">
    <location>
        <begin position="134"/>
        <end position="137"/>
    </location>
    <ligand>
        <name>GTP</name>
        <dbReference type="ChEBI" id="CHEBI:37565"/>
    </ligand>
</feature>
<evidence type="ECO:0000255" key="1">
    <source>
        <dbReference type="HAMAP-Rule" id="MF_00071"/>
    </source>
</evidence>
<accession>A6VAK9</accession>
<proteinExistence type="inferred from homology"/>
<reference key="1">
    <citation type="submission" date="2007-06" db="EMBL/GenBank/DDBJ databases">
        <authorList>
            <person name="Dodson R.J."/>
            <person name="Harkins D."/>
            <person name="Paulsen I.T."/>
        </authorList>
    </citation>
    <scope>NUCLEOTIDE SEQUENCE [LARGE SCALE GENOMIC DNA]</scope>
    <source>
        <strain>DSM 24068 / PA7</strain>
    </source>
</reference>
<comment type="function">
    <text evidence="1">Required for accurate and efficient protein synthesis under certain stress conditions. May act as a fidelity factor of the translation reaction, by catalyzing a one-codon backward translocation of tRNAs on improperly translocated ribosomes. Back-translocation proceeds from a post-translocation (POST) complex to a pre-translocation (PRE) complex, thus giving elongation factor G a second chance to translocate the tRNAs correctly. Binds to ribosomes in a GTP-dependent manner.</text>
</comment>
<comment type="catalytic activity">
    <reaction evidence="1">
        <text>GTP + H2O = GDP + phosphate + H(+)</text>
        <dbReference type="Rhea" id="RHEA:19669"/>
        <dbReference type="ChEBI" id="CHEBI:15377"/>
        <dbReference type="ChEBI" id="CHEBI:15378"/>
        <dbReference type="ChEBI" id="CHEBI:37565"/>
        <dbReference type="ChEBI" id="CHEBI:43474"/>
        <dbReference type="ChEBI" id="CHEBI:58189"/>
        <dbReference type="EC" id="3.6.5.n1"/>
    </reaction>
</comment>
<comment type="subcellular location">
    <subcellularLocation>
        <location evidence="1">Cell inner membrane</location>
        <topology evidence="1">Peripheral membrane protein</topology>
        <orientation evidence="1">Cytoplasmic side</orientation>
    </subcellularLocation>
</comment>
<comment type="similarity">
    <text evidence="1">Belongs to the TRAFAC class translation factor GTPase superfamily. Classic translation factor GTPase family. LepA subfamily.</text>
</comment>
<dbReference type="EC" id="3.6.5.n1" evidence="1"/>
<dbReference type="EMBL" id="CP000744">
    <property type="protein sequence ID" value="ABR84588.1"/>
    <property type="molecule type" value="Genomic_DNA"/>
</dbReference>
<dbReference type="RefSeq" id="WP_012077032.1">
    <property type="nucleotide sequence ID" value="NC_009656.1"/>
</dbReference>
<dbReference type="SMR" id="A6VAK9"/>
<dbReference type="GeneID" id="77222664"/>
<dbReference type="KEGG" id="pap:PSPA7_4752"/>
<dbReference type="HOGENOM" id="CLU_009995_3_3_6"/>
<dbReference type="Proteomes" id="UP000001582">
    <property type="component" value="Chromosome"/>
</dbReference>
<dbReference type="GO" id="GO:0005886">
    <property type="term" value="C:plasma membrane"/>
    <property type="evidence" value="ECO:0007669"/>
    <property type="project" value="UniProtKB-SubCell"/>
</dbReference>
<dbReference type="GO" id="GO:0005525">
    <property type="term" value="F:GTP binding"/>
    <property type="evidence" value="ECO:0007669"/>
    <property type="project" value="UniProtKB-UniRule"/>
</dbReference>
<dbReference type="GO" id="GO:0003924">
    <property type="term" value="F:GTPase activity"/>
    <property type="evidence" value="ECO:0007669"/>
    <property type="project" value="UniProtKB-UniRule"/>
</dbReference>
<dbReference type="GO" id="GO:0097216">
    <property type="term" value="F:guanosine tetraphosphate binding"/>
    <property type="evidence" value="ECO:0007669"/>
    <property type="project" value="UniProtKB-ARBA"/>
</dbReference>
<dbReference type="GO" id="GO:0043022">
    <property type="term" value="F:ribosome binding"/>
    <property type="evidence" value="ECO:0007669"/>
    <property type="project" value="UniProtKB-UniRule"/>
</dbReference>
<dbReference type="GO" id="GO:0003746">
    <property type="term" value="F:translation elongation factor activity"/>
    <property type="evidence" value="ECO:0007669"/>
    <property type="project" value="UniProtKB-UniRule"/>
</dbReference>
<dbReference type="GO" id="GO:0045727">
    <property type="term" value="P:positive regulation of translation"/>
    <property type="evidence" value="ECO:0007669"/>
    <property type="project" value="UniProtKB-UniRule"/>
</dbReference>
<dbReference type="CDD" id="cd03699">
    <property type="entry name" value="EF4_II"/>
    <property type="match status" value="1"/>
</dbReference>
<dbReference type="CDD" id="cd16260">
    <property type="entry name" value="EF4_III"/>
    <property type="match status" value="1"/>
</dbReference>
<dbReference type="CDD" id="cd01890">
    <property type="entry name" value="LepA"/>
    <property type="match status" value="1"/>
</dbReference>
<dbReference type="CDD" id="cd03709">
    <property type="entry name" value="lepA_C"/>
    <property type="match status" value="1"/>
</dbReference>
<dbReference type="FunFam" id="3.40.50.300:FF:000078">
    <property type="entry name" value="Elongation factor 4"/>
    <property type="match status" value="1"/>
</dbReference>
<dbReference type="FunFam" id="2.40.30.10:FF:000015">
    <property type="entry name" value="Translation factor GUF1, mitochondrial"/>
    <property type="match status" value="1"/>
</dbReference>
<dbReference type="FunFam" id="3.30.70.240:FF:000007">
    <property type="entry name" value="Translation factor GUF1, mitochondrial"/>
    <property type="match status" value="1"/>
</dbReference>
<dbReference type="FunFam" id="3.30.70.2570:FF:000001">
    <property type="entry name" value="Translation factor GUF1, mitochondrial"/>
    <property type="match status" value="1"/>
</dbReference>
<dbReference type="FunFam" id="3.30.70.870:FF:000004">
    <property type="entry name" value="Translation factor GUF1, mitochondrial"/>
    <property type="match status" value="1"/>
</dbReference>
<dbReference type="Gene3D" id="3.30.70.240">
    <property type="match status" value="1"/>
</dbReference>
<dbReference type="Gene3D" id="3.30.70.2570">
    <property type="entry name" value="Elongation factor 4, C-terminal domain"/>
    <property type="match status" value="1"/>
</dbReference>
<dbReference type="Gene3D" id="3.30.70.870">
    <property type="entry name" value="Elongation Factor G (Translational Gtpase), domain 3"/>
    <property type="match status" value="1"/>
</dbReference>
<dbReference type="Gene3D" id="3.40.50.300">
    <property type="entry name" value="P-loop containing nucleotide triphosphate hydrolases"/>
    <property type="match status" value="1"/>
</dbReference>
<dbReference type="Gene3D" id="2.40.30.10">
    <property type="entry name" value="Translation factors"/>
    <property type="match status" value="1"/>
</dbReference>
<dbReference type="HAMAP" id="MF_00071">
    <property type="entry name" value="LepA"/>
    <property type="match status" value="1"/>
</dbReference>
<dbReference type="InterPro" id="IPR006297">
    <property type="entry name" value="EF-4"/>
</dbReference>
<dbReference type="InterPro" id="IPR035647">
    <property type="entry name" value="EFG_III/V"/>
</dbReference>
<dbReference type="InterPro" id="IPR000640">
    <property type="entry name" value="EFG_V-like"/>
</dbReference>
<dbReference type="InterPro" id="IPR004161">
    <property type="entry name" value="EFTu-like_2"/>
</dbReference>
<dbReference type="InterPro" id="IPR038363">
    <property type="entry name" value="LepA_C_sf"/>
</dbReference>
<dbReference type="InterPro" id="IPR013842">
    <property type="entry name" value="LepA_CTD"/>
</dbReference>
<dbReference type="InterPro" id="IPR035654">
    <property type="entry name" value="LepA_IV"/>
</dbReference>
<dbReference type="InterPro" id="IPR027417">
    <property type="entry name" value="P-loop_NTPase"/>
</dbReference>
<dbReference type="InterPro" id="IPR005225">
    <property type="entry name" value="Small_GTP-bd"/>
</dbReference>
<dbReference type="InterPro" id="IPR000795">
    <property type="entry name" value="T_Tr_GTP-bd_dom"/>
</dbReference>
<dbReference type="NCBIfam" id="TIGR01393">
    <property type="entry name" value="lepA"/>
    <property type="match status" value="1"/>
</dbReference>
<dbReference type="NCBIfam" id="TIGR00231">
    <property type="entry name" value="small_GTP"/>
    <property type="match status" value="1"/>
</dbReference>
<dbReference type="PANTHER" id="PTHR43512:SF4">
    <property type="entry name" value="TRANSLATION FACTOR GUF1 HOMOLOG, CHLOROPLASTIC"/>
    <property type="match status" value="1"/>
</dbReference>
<dbReference type="PANTHER" id="PTHR43512">
    <property type="entry name" value="TRANSLATION FACTOR GUF1-RELATED"/>
    <property type="match status" value="1"/>
</dbReference>
<dbReference type="Pfam" id="PF00679">
    <property type="entry name" value="EFG_C"/>
    <property type="match status" value="1"/>
</dbReference>
<dbReference type="Pfam" id="PF00009">
    <property type="entry name" value="GTP_EFTU"/>
    <property type="match status" value="1"/>
</dbReference>
<dbReference type="Pfam" id="PF03144">
    <property type="entry name" value="GTP_EFTU_D2"/>
    <property type="match status" value="1"/>
</dbReference>
<dbReference type="Pfam" id="PF06421">
    <property type="entry name" value="LepA_C"/>
    <property type="match status" value="1"/>
</dbReference>
<dbReference type="PRINTS" id="PR00315">
    <property type="entry name" value="ELONGATNFCT"/>
</dbReference>
<dbReference type="SUPFAM" id="SSF54980">
    <property type="entry name" value="EF-G C-terminal domain-like"/>
    <property type="match status" value="2"/>
</dbReference>
<dbReference type="SUPFAM" id="SSF52540">
    <property type="entry name" value="P-loop containing nucleoside triphosphate hydrolases"/>
    <property type="match status" value="1"/>
</dbReference>
<dbReference type="PROSITE" id="PS51722">
    <property type="entry name" value="G_TR_2"/>
    <property type="match status" value="1"/>
</dbReference>
<organism>
    <name type="scientific">Pseudomonas paraeruginosa (strain DSM 24068 / PA7)</name>
    <name type="common">Pseudomonas aeruginosa (strain PA7)</name>
    <dbReference type="NCBI Taxonomy" id="381754"/>
    <lineage>
        <taxon>Bacteria</taxon>
        <taxon>Pseudomonadati</taxon>
        <taxon>Pseudomonadota</taxon>
        <taxon>Gammaproteobacteria</taxon>
        <taxon>Pseudomonadales</taxon>
        <taxon>Pseudomonadaceae</taxon>
        <taxon>Pseudomonas</taxon>
        <taxon>Pseudomonas paraeruginosa</taxon>
    </lineage>
</organism>